<dbReference type="EMBL" id="AE014075">
    <property type="protein sequence ID" value="AAN80234.1"/>
    <property type="molecule type" value="Genomic_DNA"/>
</dbReference>
<dbReference type="RefSeq" id="WP_001128858.1">
    <property type="nucleotide sequence ID" value="NZ_CP051263.1"/>
</dbReference>
<dbReference type="SMR" id="P0AAH5"/>
<dbReference type="STRING" id="199310.c1768"/>
<dbReference type="GeneID" id="93775416"/>
<dbReference type="KEGG" id="ecc:c1768"/>
<dbReference type="eggNOG" id="COG4172">
    <property type="taxonomic scope" value="Bacteria"/>
</dbReference>
<dbReference type="HOGENOM" id="CLU_000604_1_23_6"/>
<dbReference type="BioCyc" id="ECOL199310:C1768-MONOMER"/>
<dbReference type="Proteomes" id="UP000001410">
    <property type="component" value="Chromosome"/>
</dbReference>
<dbReference type="GO" id="GO:0005886">
    <property type="term" value="C:plasma membrane"/>
    <property type="evidence" value="ECO:0007669"/>
    <property type="project" value="UniProtKB-SubCell"/>
</dbReference>
<dbReference type="GO" id="GO:0005524">
    <property type="term" value="F:ATP binding"/>
    <property type="evidence" value="ECO:0007669"/>
    <property type="project" value="UniProtKB-KW"/>
</dbReference>
<dbReference type="GO" id="GO:0016887">
    <property type="term" value="F:ATP hydrolysis activity"/>
    <property type="evidence" value="ECO:0007669"/>
    <property type="project" value="InterPro"/>
</dbReference>
<dbReference type="GO" id="GO:0015833">
    <property type="term" value="P:peptide transport"/>
    <property type="evidence" value="ECO:0007669"/>
    <property type="project" value="UniProtKB-KW"/>
</dbReference>
<dbReference type="GO" id="GO:0015031">
    <property type="term" value="P:protein transport"/>
    <property type="evidence" value="ECO:0007669"/>
    <property type="project" value="UniProtKB-KW"/>
</dbReference>
<dbReference type="CDD" id="cd03257">
    <property type="entry name" value="ABC_NikE_OppD_transporters"/>
    <property type="match status" value="1"/>
</dbReference>
<dbReference type="FunFam" id="3.40.50.300:FF:000443">
    <property type="entry name" value="Peptide transport system ATP-binding protein SapD"/>
    <property type="match status" value="1"/>
</dbReference>
<dbReference type="Gene3D" id="3.40.50.300">
    <property type="entry name" value="P-loop containing nucleotide triphosphate hydrolases"/>
    <property type="match status" value="1"/>
</dbReference>
<dbReference type="InterPro" id="IPR003593">
    <property type="entry name" value="AAA+_ATPase"/>
</dbReference>
<dbReference type="InterPro" id="IPR050388">
    <property type="entry name" value="ABC_Ni/Peptide_Import"/>
</dbReference>
<dbReference type="InterPro" id="IPR003439">
    <property type="entry name" value="ABC_transporter-like_ATP-bd"/>
</dbReference>
<dbReference type="InterPro" id="IPR013563">
    <property type="entry name" value="Oligopep_ABC_C"/>
</dbReference>
<dbReference type="InterPro" id="IPR027417">
    <property type="entry name" value="P-loop_NTPase"/>
</dbReference>
<dbReference type="NCBIfam" id="TIGR01727">
    <property type="entry name" value="oligo_HPY"/>
    <property type="match status" value="1"/>
</dbReference>
<dbReference type="NCBIfam" id="NF011674">
    <property type="entry name" value="PRK15093.1"/>
    <property type="match status" value="1"/>
</dbReference>
<dbReference type="PANTHER" id="PTHR43297">
    <property type="entry name" value="OLIGOPEPTIDE TRANSPORT ATP-BINDING PROTEIN APPD"/>
    <property type="match status" value="1"/>
</dbReference>
<dbReference type="PANTHER" id="PTHR43297:SF4">
    <property type="entry name" value="PUTRESCINE EXPORT SYSTEM ATP-BINDING PROTEIN SAPD"/>
    <property type="match status" value="1"/>
</dbReference>
<dbReference type="Pfam" id="PF00005">
    <property type="entry name" value="ABC_tran"/>
    <property type="match status" value="1"/>
</dbReference>
<dbReference type="Pfam" id="PF08352">
    <property type="entry name" value="oligo_HPY"/>
    <property type="match status" value="1"/>
</dbReference>
<dbReference type="SMART" id="SM00382">
    <property type="entry name" value="AAA"/>
    <property type="match status" value="1"/>
</dbReference>
<dbReference type="SUPFAM" id="SSF52540">
    <property type="entry name" value="P-loop containing nucleoside triphosphate hydrolases"/>
    <property type="match status" value="1"/>
</dbReference>
<dbReference type="PROSITE" id="PS50893">
    <property type="entry name" value="ABC_TRANSPORTER_2"/>
    <property type="match status" value="1"/>
</dbReference>
<protein>
    <recommendedName>
        <fullName>Peptide transport system ATP-binding protein SapD</fullName>
    </recommendedName>
</protein>
<comment type="function">
    <text evidence="1">Involved in a peptide intake transport system that plays a role in the resistance to antimicrobial peptides.</text>
</comment>
<comment type="subcellular location">
    <subcellularLocation>
        <location evidence="3">Cell inner membrane</location>
        <topology evidence="3">Peripheral membrane protein</topology>
    </subcellularLocation>
</comment>
<comment type="similarity">
    <text evidence="3">Belongs to the ABC transporter superfamily.</text>
</comment>
<reference key="1">
    <citation type="journal article" date="2002" name="Proc. Natl. Acad. Sci. U.S.A.">
        <title>Extensive mosaic structure revealed by the complete genome sequence of uropathogenic Escherichia coli.</title>
        <authorList>
            <person name="Welch R.A."/>
            <person name="Burland V."/>
            <person name="Plunkett G. III"/>
            <person name="Redford P."/>
            <person name="Roesch P."/>
            <person name="Rasko D."/>
            <person name="Buckles E.L."/>
            <person name="Liou S.-R."/>
            <person name="Boutin A."/>
            <person name="Hackett J."/>
            <person name="Stroud D."/>
            <person name="Mayhew G.F."/>
            <person name="Rose D.J."/>
            <person name="Zhou S."/>
            <person name="Schwartz D.C."/>
            <person name="Perna N.T."/>
            <person name="Mobley H.L.T."/>
            <person name="Donnenberg M.S."/>
            <person name="Blattner F.R."/>
        </authorList>
    </citation>
    <scope>NUCLEOTIDE SEQUENCE [LARGE SCALE GENOMIC DNA]</scope>
    <source>
        <strain>CFT073 / ATCC 700928 / UPEC</strain>
    </source>
</reference>
<keyword id="KW-0067">ATP-binding</keyword>
<keyword id="KW-0997">Cell inner membrane</keyword>
<keyword id="KW-1003">Cell membrane</keyword>
<keyword id="KW-0472">Membrane</keyword>
<keyword id="KW-0547">Nucleotide-binding</keyword>
<keyword id="KW-0571">Peptide transport</keyword>
<keyword id="KW-0653">Protein transport</keyword>
<keyword id="KW-1185">Reference proteome</keyword>
<keyword id="KW-0813">Transport</keyword>
<accession>P0AAH5</accession>
<accession>P36635</accession>
<proteinExistence type="inferred from homology"/>
<sequence length="330" mass="37661">MPLLDIRNLTIEFKTGDEWVKAVDRVSMTLTEGEIRGLVGESGSGKSLIAKAICGVNKDNWRVTADRMRFDDIDLLRLSARERRKLVGHNVSMIFQEPQSCLDPSERVGRQLMQNIPAWTYKGRWWQRFGWRKRRAIELLHRVGIKDHKDAMRSFPYELTEGECQKVMIAIALANQPRLLIADEPTNSMEPTTQAQIFRLLTRLNQNSNTTILLISHDLQMLSQWADKINVLYCGQTVETAPSKELVTMPHHPYTQALIRAIPDFGSAMPHKSRLNTLPGAIPLLEQLPIGCRLGPRCPYAQRECIVTPRLTGAKNHLYACHFPLNMEKE</sequence>
<gene>
    <name type="primary">sapD</name>
    <name type="ordered locus">c1768</name>
</gene>
<organism>
    <name type="scientific">Escherichia coli O6:H1 (strain CFT073 / ATCC 700928 / UPEC)</name>
    <dbReference type="NCBI Taxonomy" id="199310"/>
    <lineage>
        <taxon>Bacteria</taxon>
        <taxon>Pseudomonadati</taxon>
        <taxon>Pseudomonadota</taxon>
        <taxon>Gammaproteobacteria</taxon>
        <taxon>Enterobacterales</taxon>
        <taxon>Enterobacteriaceae</taxon>
        <taxon>Escherichia</taxon>
    </lineage>
</organism>
<evidence type="ECO:0000250" key="1"/>
<evidence type="ECO:0000255" key="2">
    <source>
        <dbReference type="PROSITE-ProRule" id="PRU00434"/>
    </source>
</evidence>
<evidence type="ECO:0000305" key="3"/>
<feature type="chain" id="PRO_0000092964" description="Peptide transport system ATP-binding protein SapD">
    <location>
        <begin position="1"/>
        <end position="330"/>
    </location>
</feature>
<feature type="domain" description="ABC transporter" evidence="2">
    <location>
        <begin position="6"/>
        <end position="259"/>
    </location>
</feature>
<feature type="binding site" evidence="2">
    <location>
        <begin position="40"/>
        <end position="47"/>
    </location>
    <ligand>
        <name>ATP</name>
        <dbReference type="ChEBI" id="CHEBI:30616"/>
    </ligand>
</feature>
<name>SAPD_ECOL6</name>